<evidence type="ECO:0000255" key="1">
    <source>
        <dbReference type="HAMAP-Rule" id="MF_01721"/>
    </source>
</evidence>
<evidence type="ECO:0000305" key="2"/>
<reference key="1">
    <citation type="journal article" date="2010" name="Genome Biol. Evol.">
        <title>Continuing evolution of Burkholderia mallei through genome reduction and large-scale rearrangements.</title>
        <authorList>
            <person name="Losada L."/>
            <person name="Ronning C.M."/>
            <person name="DeShazer D."/>
            <person name="Woods D."/>
            <person name="Fedorova N."/>
            <person name="Kim H.S."/>
            <person name="Shabalina S.A."/>
            <person name="Pearson T.R."/>
            <person name="Brinkac L."/>
            <person name="Tan P."/>
            <person name="Nandi T."/>
            <person name="Crabtree J."/>
            <person name="Badger J."/>
            <person name="Beckstrom-Sternberg S."/>
            <person name="Saqib M."/>
            <person name="Schutzer S.E."/>
            <person name="Keim P."/>
            <person name="Nierman W.C."/>
        </authorList>
    </citation>
    <scope>NUCLEOTIDE SEQUENCE [LARGE SCALE GENOMIC DNA]</scope>
    <source>
        <strain>1710b</strain>
    </source>
</reference>
<accession>Q3JNJ9</accession>
<keyword id="KW-0067">ATP-binding</keyword>
<keyword id="KW-0997">Cell inner membrane</keyword>
<keyword id="KW-1003">Cell membrane</keyword>
<keyword id="KW-0472">Membrane</keyword>
<keyword id="KW-0547">Nucleotide-binding</keyword>
<keyword id="KW-0677">Repeat</keyword>
<keyword id="KW-0762">Sugar transport</keyword>
<keyword id="KW-1278">Translocase</keyword>
<keyword id="KW-0813">Transport</keyword>
<name>ARAG_BURP1</name>
<protein>
    <recommendedName>
        <fullName evidence="1">Arabinose import ATP-binding protein AraG</fullName>
        <ecNumber evidence="1">7.5.2.12</ecNumber>
    </recommendedName>
</protein>
<feature type="chain" id="PRO_0000270459" description="Arabinose import ATP-binding protein AraG">
    <location>
        <begin position="1"/>
        <end position="503"/>
    </location>
</feature>
<feature type="domain" description="ABC transporter 1" evidence="1">
    <location>
        <begin position="5"/>
        <end position="240"/>
    </location>
</feature>
<feature type="domain" description="ABC transporter 2" evidence="1">
    <location>
        <begin position="253"/>
        <end position="497"/>
    </location>
</feature>
<feature type="binding site" evidence="1">
    <location>
        <begin position="37"/>
        <end position="44"/>
    </location>
    <ligand>
        <name>ATP</name>
        <dbReference type="ChEBI" id="CHEBI:30616"/>
    </ligand>
</feature>
<sequence length="503" mass="55034">MAAALRFDNIGKVFPGVRALDGISFDVQAGQVHGLMGENGAGKSTLLKILGGEYQPDSGSVLVDGRAMRFPSAAASIAAGVAVIHQELQYVPDLTVAENLLLGRLPSALGWVRKRDAQRFVRERLAAMGVDLDAQAKLRRLSIAQRQMVEICKALLRNARVIALDEPTSSLSHRETEVLFKLVDDLRRDGRALIYISHRMDEIYRLCDACTIFRDGRQVASHASLANVPRETLVRQMVGREISDIYHYAPRALGDVRLSARALEGDALRAGASFDVRAGEIVGFFGLVGAGRSELMRVIYGAQRRTGGALTLDGEPLDIRSTRDAIRRGIVLCPEDRKEEGIVAHASVAENINISCRRHGLRAGLFLDRKREAETADRFIKLLKIKTPNRRQKIRFLSGGNQQKAILARWLAEPDLKVVILDEPTRGIDVGAKHEIYGVIYELAKRGCAIVMVSSELPEVLGVSDRIVVMREGRIAGELARGEANEEAVLNLALPQGATAHAA</sequence>
<dbReference type="EC" id="7.5.2.12" evidence="1"/>
<dbReference type="EMBL" id="CP000124">
    <property type="protein sequence ID" value="ABA50050.1"/>
    <property type="status" value="ALT_INIT"/>
    <property type="molecule type" value="Genomic_DNA"/>
</dbReference>
<dbReference type="RefSeq" id="WP_004522056.1">
    <property type="nucleotide sequence ID" value="NC_007434.1"/>
</dbReference>
<dbReference type="SMR" id="Q3JNJ9"/>
<dbReference type="EnsemblBacteria" id="ABA50050">
    <property type="protein sequence ID" value="ABA50050"/>
    <property type="gene ID" value="BURPS1710b_3483"/>
</dbReference>
<dbReference type="GeneID" id="93061565"/>
<dbReference type="KEGG" id="bpm:BURPS1710b_3483"/>
<dbReference type="HOGENOM" id="CLU_000604_92_3_4"/>
<dbReference type="Proteomes" id="UP000002700">
    <property type="component" value="Chromosome I"/>
</dbReference>
<dbReference type="GO" id="GO:0005886">
    <property type="term" value="C:plasma membrane"/>
    <property type="evidence" value="ECO:0007669"/>
    <property type="project" value="UniProtKB-SubCell"/>
</dbReference>
<dbReference type="GO" id="GO:0015612">
    <property type="term" value="F:ABC-type L-arabinose transporter activity"/>
    <property type="evidence" value="ECO:0007669"/>
    <property type="project" value="UniProtKB-EC"/>
</dbReference>
<dbReference type="GO" id="GO:0005524">
    <property type="term" value="F:ATP binding"/>
    <property type="evidence" value="ECO:0007669"/>
    <property type="project" value="UniProtKB-KW"/>
</dbReference>
<dbReference type="GO" id="GO:0016887">
    <property type="term" value="F:ATP hydrolysis activity"/>
    <property type="evidence" value="ECO:0007669"/>
    <property type="project" value="InterPro"/>
</dbReference>
<dbReference type="CDD" id="cd03216">
    <property type="entry name" value="ABC_Carb_Monos_I"/>
    <property type="match status" value="1"/>
</dbReference>
<dbReference type="CDD" id="cd03215">
    <property type="entry name" value="ABC_Carb_Monos_II"/>
    <property type="match status" value="1"/>
</dbReference>
<dbReference type="FunFam" id="3.40.50.300:FF:000126">
    <property type="entry name" value="Galactose/methyl galactoside import ATP-binding protein MglA"/>
    <property type="match status" value="1"/>
</dbReference>
<dbReference type="FunFam" id="3.40.50.300:FF:000127">
    <property type="entry name" value="Ribose import ATP-binding protein RbsA"/>
    <property type="match status" value="1"/>
</dbReference>
<dbReference type="Gene3D" id="3.40.50.300">
    <property type="entry name" value="P-loop containing nucleotide triphosphate hydrolases"/>
    <property type="match status" value="2"/>
</dbReference>
<dbReference type="InterPro" id="IPR003593">
    <property type="entry name" value="AAA+_ATPase"/>
</dbReference>
<dbReference type="InterPro" id="IPR050107">
    <property type="entry name" value="ABC_carbohydrate_import_ATPase"/>
</dbReference>
<dbReference type="InterPro" id="IPR003439">
    <property type="entry name" value="ABC_transporter-like_ATP-bd"/>
</dbReference>
<dbReference type="InterPro" id="IPR017871">
    <property type="entry name" value="ABC_transporter-like_CS"/>
</dbReference>
<dbReference type="InterPro" id="IPR027417">
    <property type="entry name" value="P-loop_NTPase"/>
</dbReference>
<dbReference type="NCBIfam" id="NF008442">
    <property type="entry name" value="PRK11288.1"/>
    <property type="match status" value="1"/>
</dbReference>
<dbReference type="PANTHER" id="PTHR43790:SF6">
    <property type="entry name" value="ARABINOSE IMPORT ATP-BINDING PROTEIN ARAG"/>
    <property type="match status" value="1"/>
</dbReference>
<dbReference type="PANTHER" id="PTHR43790">
    <property type="entry name" value="CARBOHYDRATE TRANSPORT ATP-BINDING PROTEIN MG119-RELATED"/>
    <property type="match status" value="1"/>
</dbReference>
<dbReference type="Pfam" id="PF00005">
    <property type="entry name" value="ABC_tran"/>
    <property type="match status" value="2"/>
</dbReference>
<dbReference type="SMART" id="SM00382">
    <property type="entry name" value="AAA"/>
    <property type="match status" value="2"/>
</dbReference>
<dbReference type="SUPFAM" id="SSF52540">
    <property type="entry name" value="P-loop containing nucleoside triphosphate hydrolases"/>
    <property type="match status" value="2"/>
</dbReference>
<dbReference type="PROSITE" id="PS00211">
    <property type="entry name" value="ABC_TRANSPORTER_1"/>
    <property type="match status" value="1"/>
</dbReference>
<dbReference type="PROSITE" id="PS50893">
    <property type="entry name" value="ABC_TRANSPORTER_2"/>
    <property type="match status" value="2"/>
</dbReference>
<dbReference type="PROSITE" id="PS51268">
    <property type="entry name" value="ARAG"/>
    <property type="match status" value="1"/>
</dbReference>
<gene>
    <name evidence="1" type="primary">araG</name>
    <name type="ordered locus">BURPS1710b_3483</name>
</gene>
<organism>
    <name type="scientific">Burkholderia pseudomallei (strain 1710b)</name>
    <dbReference type="NCBI Taxonomy" id="320372"/>
    <lineage>
        <taxon>Bacteria</taxon>
        <taxon>Pseudomonadati</taxon>
        <taxon>Pseudomonadota</taxon>
        <taxon>Betaproteobacteria</taxon>
        <taxon>Burkholderiales</taxon>
        <taxon>Burkholderiaceae</taxon>
        <taxon>Burkholderia</taxon>
        <taxon>pseudomallei group</taxon>
    </lineage>
</organism>
<comment type="function">
    <text evidence="1">Part of the ABC transporter complex AraFGH involved in arabinose import. Responsible for energy coupling to the transport system.</text>
</comment>
<comment type="catalytic activity">
    <reaction evidence="1">
        <text>L-arabinose(out) + ATP + H2O = L-arabinose(in) + ADP + phosphate + H(+)</text>
        <dbReference type="Rhea" id="RHEA:30007"/>
        <dbReference type="ChEBI" id="CHEBI:15377"/>
        <dbReference type="ChEBI" id="CHEBI:15378"/>
        <dbReference type="ChEBI" id="CHEBI:17535"/>
        <dbReference type="ChEBI" id="CHEBI:30616"/>
        <dbReference type="ChEBI" id="CHEBI:43474"/>
        <dbReference type="ChEBI" id="CHEBI:456216"/>
        <dbReference type="EC" id="7.5.2.12"/>
    </reaction>
</comment>
<comment type="subunit">
    <text evidence="1">The complex is composed of two ATP-binding proteins (AraG), two transmembrane proteins (AraH) and a solute-binding protein (AraF).</text>
</comment>
<comment type="subcellular location">
    <subcellularLocation>
        <location evidence="1">Cell inner membrane</location>
        <topology evidence="1">Peripheral membrane protein</topology>
    </subcellularLocation>
</comment>
<comment type="similarity">
    <text evidence="1">Belongs to the ABC transporter superfamily. Arabinose importer (TC 3.A.1.2.2) family.</text>
</comment>
<comment type="sequence caution" evidence="2">
    <conflict type="erroneous initiation">
        <sequence resource="EMBL-CDS" id="ABA50050"/>
    </conflict>
</comment>
<proteinExistence type="inferred from homology"/>